<comment type="function">
    <text evidence="3 6 7 9 12 14 18 19">Involved in the perception of CLV3 and CLV3-like (CLE) peptides, that act as extracellular signals regulating meristem maintenance. Modulates root, shoot and flower apical meristem maintenance and floral organ development regulation, probably via CLAVATA (CLV)-like pathways involving at least CLV3 and CLE19. In complex with CLV2, perceives secreted CLV3-like effector proteins from plant-parasitic cyst nematodes as ligand mimics of the plant CLE signaling pathway (PubMed:21265896). This recognition is required for proper feeding structure (syncytium) development and ultimately successful nematode infection (PubMed:21265896). CLE14 perception by CLV2/CRN complex triggers root meristem differentiation (PubMed:20697738, PubMed:28586647). Required for the sensing of the root CLE peptides (e.g. CLE8, CLE9/CLE10, CLE11, CLE13, CLE14, CLE16, CLE17, CLE18, CLE20, CLE21, CLE25, CLE26, CLE40, CLE41/CLE44 and CLE45), which also involves CLV2 and leads to root growth regulation, mostly in the phloem and protophloem (PubMed:28607033). Promotes the accumulation of BAM3, especially at later stages of protophloem development (PubMed:28607033).</text>
</comment>
<comment type="subunit">
    <text evidence="8 9 10 11 12 17 19">Self-interacts. Parts of a tetrameric complex made of two CLV2/CRN heterodimers that can interact with CLV3 and CLE peptides. CLV2/CRN heterodimer interacts with CLV1 homodimers. Interacts with CLV1 and CLV2 (PubMed:27229734). CLV2/CRN heterodimer can interact with BAM3 (PubMed:28607033).</text>
</comment>
<comment type="subcellular location">
    <subcellularLocation>
        <location evidence="4 5 8 9 13 17 19">Cell membrane</location>
        <topology evidence="4 5 8 9 13">Single-pass type I membrane protein</topology>
    </subcellularLocation>
    <subcellularLocation>
        <location evidence="9 17 19">Endoplasmic reticulum membrane</location>
        <topology evidence="1">Single-pass type I membrane protein</topology>
    </subcellularLocation>
    <text evidence="9 17 19">Requires CLV2 for export from the endoplasmic reticulum and localization to the plasma membrane.</text>
</comment>
<comment type="alternative products">
    <event type="alternative splicing"/>
    <isoform>
        <id>Q9LYU7-1</id>
        <name>1</name>
        <sequence type="displayed"/>
    </isoform>
    <isoform>
        <id>Q9LYU7-2</id>
        <name>2</name>
        <sequence type="described" ref="VSP_040147"/>
    </isoform>
    <isoform>
        <id>Q9LYU7-3</id>
        <name>3</name>
        <sequence type="described" ref="VSP_040147 VSP_040148 VSP_040149"/>
    </isoform>
</comment>
<comment type="tissue specificity">
    <text evidence="6 7 14 19">Present in roots, stems, leaves, inflorescence, flowers and siliques. Mostly expressed in shoot tips and, to a lesser extent, in young organs and roots. Also expressed in the inner tissues of the proximal root meristem (PubMed:21265896). Expressed in the vascular cylinder of root tips, mostly in phloem poles (PubMed:28607033).</text>
</comment>
<comment type="developmental stage">
    <text evidence="6 17">First observed in 16-cells stage embryo and surrounding region. From early heart to early torpedo stage, confined to the developing vasculature of the hypocotyl, cotyledons, and developing root. Faint expression in the emerging shoot apical meristem (SAM) at the torpedo stage. After germination, present in root, shoot and inflorescence meristems, as well as in young flower primordia and ovules (PubMed:18381924). In roots, detected in the stele, endodermis basal and cortex cells, and at the end of the root meristem, comprising the quiescent center, surrounding initials, and vascular precursors (PubMed:18381924, PubMed:27229734). Also present in the vasculature of primary and lateral roots, in the pericycle at sites of lateral root initiation, in lateral root meristems, and in the vasculature of the leaves. Accumulates in stamen and carpel primordia. Expressed in young provascular tissue of floral organs and stem tissue (PubMed:18381924).</text>
</comment>
<comment type="domain">
    <text>The protein kinase domain is predicted to be catalytically inactive.</text>
</comment>
<comment type="disruption phenotype">
    <text evidence="14 15 16 17 19">Insensitivity to root growth regulation by root CLE peptides (e.g. CLE8, CLE9/CLE10, CLE11, CLE13, CLE14, CLE16, CLE17, CLE18, CLE20, CLE21, CLE25, CLE26, CLE40, CLE41/CLE44 and CLE45) (PubMed:28607033). Lower carpels production (PubMed:27229734). Impaired interaction with CLV2 (PubMed:27229734). Reduced levels of BAM3, especially at later stages of protophloem development (PubMed:28607033). Ectopic fruit organ initiation after floral meristem termination (PubMed:21705761). Enhanced resistance to nematode infection (PubMed:21265896). Enhanced disease resistance response to the bacterial pathogen Ralstonia solanacearum (PubMed:26990325).</text>
</comment>
<comment type="similarity">
    <text evidence="2">Belongs to the protein kinase superfamily. Ser/Thr protein kinase family.</text>
</comment>
<comment type="sequence caution" evidence="23">
    <conflict type="frameshift">
        <sequence resource="EMBL" id="AK228624"/>
    </conflict>
</comment>
<comment type="sequence caution" evidence="23">
    <conflict type="miscellaneous discrepancy">
        <sequence resource="EMBL" id="BX829584"/>
    </conflict>
    <text>Sequencing errors.</text>
</comment>
<reference key="1">
    <citation type="journal article" date="2000" name="Nature">
        <title>Sequence and analysis of chromosome 5 of the plant Arabidopsis thaliana.</title>
        <authorList>
            <person name="Tabata S."/>
            <person name="Kaneko T."/>
            <person name="Nakamura Y."/>
            <person name="Kotani H."/>
            <person name="Kato T."/>
            <person name="Asamizu E."/>
            <person name="Miyajima N."/>
            <person name="Sasamoto S."/>
            <person name="Kimura T."/>
            <person name="Hosouchi T."/>
            <person name="Kawashima K."/>
            <person name="Kohara M."/>
            <person name="Matsumoto M."/>
            <person name="Matsuno A."/>
            <person name="Muraki A."/>
            <person name="Nakayama S."/>
            <person name="Nakazaki N."/>
            <person name="Naruo K."/>
            <person name="Okumura S."/>
            <person name="Shinpo S."/>
            <person name="Takeuchi C."/>
            <person name="Wada T."/>
            <person name="Watanabe A."/>
            <person name="Yamada M."/>
            <person name="Yasuda M."/>
            <person name="Sato S."/>
            <person name="de la Bastide M."/>
            <person name="Huang E."/>
            <person name="Spiegel L."/>
            <person name="Gnoj L."/>
            <person name="O'Shaughnessy A."/>
            <person name="Preston R."/>
            <person name="Habermann K."/>
            <person name="Murray J."/>
            <person name="Johnson D."/>
            <person name="Rohlfing T."/>
            <person name="Nelson J."/>
            <person name="Stoneking T."/>
            <person name="Pepin K."/>
            <person name="Spieth J."/>
            <person name="Sekhon M."/>
            <person name="Armstrong J."/>
            <person name="Becker M."/>
            <person name="Belter E."/>
            <person name="Cordum H."/>
            <person name="Cordes M."/>
            <person name="Courtney L."/>
            <person name="Courtney W."/>
            <person name="Dante M."/>
            <person name="Du H."/>
            <person name="Edwards J."/>
            <person name="Fryman J."/>
            <person name="Haakensen B."/>
            <person name="Lamar E."/>
            <person name="Latreille P."/>
            <person name="Leonard S."/>
            <person name="Meyer R."/>
            <person name="Mulvaney E."/>
            <person name="Ozersky P."/>
            <person name="Riley A."/>
            <person name="Strowmatt C."/>
            <person name="Wagner-McPherson C."/>
            <person name="Wollam A."/>
            <person name="Yoakum M."/>
            <person name="Bell M."/>
            <person name="Dedhia N."/>
            <person name="Parnell L."/>
            <person name="Shah R."/>
            <person name="Rodriguez M."/>
            <person name="Hoon See L."/>
            <person name="Vil D."/>
            <person name="Baker J."/>
            <person name="Kirchoff K."/>
            <person name="Toth K."/>
            <person name="King L."/>
            <person name="Bahret A."/>
            <person name="Miller B."/>
            <person name="Marra M.A."/>
            <person name="Martienssen R."/>
            <person name="McCombie W.R."/>
            <person name="Wilson R.K."/>
            <person name="Murphy G."/>
            <person name="Bancroft I."/>
            <person name="Volckaert G."/>
            <person name="Wambutt R."/>
            <person name="Duesterhoeft A."/>
            <person name="Stiekema W."/>
            <person name="Pohl T."/>
            <person name="Entian K.-D."/>
            <person name="Terryn N."/>
            <person name="Hartley N."/>
            <person name="Bent E."/>
            <person name="Johnson S."/>
            <person name="Langham S.-A."/>
            <person name="McCullagh B."/>
            <person name="Robben J."/>
            <person name="Grymonprez B."/>
            <person name="Zimmermann W."/>
            <person name="Ramsperger U."/>
            <person name="Wedler H."/>
            <person name="Balke K."/>
            <person name="Wedler E."/>
            <person name="Peters S."/>
            <person name="van Staveren M."/>
            <person name="Dirkse W."/>
            <person name="Mooijman P."/>
            <person name="Klein Lankhorst R."/>
            <person name="Weitzenegger T."/>
            <person name="Bothe G."/>
            <person name="Rose M."/>
            <person name="Hauf J."/>
            <person name="Berneiser S."/>
            <person name="Hempel S."/>
            <person name="Feldpausch M."/>
            <person name="Lamberth S."/>
            <person name="Villarroel R."/>
            <person name="Gielen J."/>
            <person name="Ardiles W."/>
            <person name="Bents O."/>
            <person name="Lemcke K."/>
            <person name="Kolesov G."/>
            <person name="Mayer K.F.X."/>
            <person name="Rudd S."/>
            <person name="Schoof H."/>
            <person name="Schueller C."/>
            <person name="Zaccaria P."/>
            <person name="Mewes H.-W."/>
            <person name="Bevan M."/>
            <person name="Fransz P.F."/>
        </authorList>
    </citation>
    <scope>NUCLEOTIDE SEQUENCE [LARGE SCALE GENOMIC DNA]</scope>
    <source>
        <strain>cv. Columbia</strain>
    </source>
</reference>
<reference key="2">
    <citation type="journal article" date="2017" name="Plant J.">
        <title>Araport11: a complete reannotation of the Arabidopsis thaliana reference genome.</title>
        <authorList>
            <person name="Cheng C.Y."/>
            <person name="Krishnakumar V."/>
            <person name="Chan A.P."/>
            <person name="Thibaud-Nissen F."/>
            <person name="Schobel S."/>
            <person name="Town C.D."/>
        </authorList>
    </citation>
    <scope>GENOME REANNOTATION</scope>
    <source>
        <strain>cv. Columbia</strain>
    </source>
</reference>
<reference key="3">
    <citation type="journal article" date="2004" name="Genome Res.">
        <title>Whole genome sequence comparisons and 'full-length' cDNA sequences: a combined approach to evaluate and improve Arabidopsis genome annotation.</title>
        <authorList>
            <person name="Castelli V."/>
            <person name="Aury J.-M."/>
            <person name="Jaillon O."/>
            <person name="Wincker P."/>
            <person name="Clepet C."/>
            <person name="Menard M."/>
            <person name="Cruaud C."/>
            <person name="Quetier F."/>
            <person name="Scarpelli C."/>
            <person name="Schaechter V."/>
            <person name="Temple G."/>
            <person name="Caboche M."/>
            <person name="Weissenbach J."/>
            <person name="Salanoubat M."/>
        </authorList>
    </citation>
    <scope>NUCLEOTIDE SEQUENCE [LARGE SCALE MRNA] (ISOFORMS 1 AND 2)</scope>
    <source>
        <strain>cv. Columbia</strain>
    </source>
</reference>
<reference key="4">
    <citation type="submission" date="2006-07" db="EMBL/GenBank/DDBJ databases">
        <title>Large-scale analysis of RIKEN Arabidopsis full-length (RAFL) cDNAs.</title>
        <authorList>
            <person name="Totoki Y."/>
            <person name="Seki M."/>
            <person name="Ishida J."/>
            <person name="Nakajima M."/>
            <person name="Enju A."/>
            <person name="Kamiya A."/>
            <person name="Narusaka M."/>
            <person name="Shin-i T."/>
            <person name="Nakagawa M."/>
            <person name="Sakamoto N."/>
            <person name="Oishi K."/>
            <person name="Kohara Y."/>
            <person name="Kobayashi M."/>
            <person name="Toyoda A."/>
            <person name="Sakaki Y."/>
            <person name="Sakurai T."/>
            <person name="Iida K."/>
            <person name="Akiyama K."/>
            <person name="Satou M."/>
            <person name="Toyoda T."/>
            <person name="Konagaya A."/>
            <person name="Carninci P."/>
            <person name="Kawai J."/>
            <person name="Hayashizaki Y."/>
            <person name="Shinozaki K."/>
        </authorList>
    </citation>
    <scope>NUCLEOTIDE SEQUENCE [LARGE SCALE MRNA] (ISOFORM 1)</scope>
    <source>
        <strain>cv. Columbia</strain>
    </source>
</reference>
<reference key="5">
    <citation type="journal article" date="2003" name="Curr. Biol.">
        <title>Root-specific CLE19 overexpression and the sol1/2 suppressors implicate a CLV-like pathway in the control of Arabidopsis root meristem maintenance.</title>
        <authorList>
            <person name="Casamitjana-Martinez E."/>
            <person name="Hofhuis H.F."/>
            <person name="Xu J."/>
            <person name="Liu C.-M."/>
            <person name="Heidstra R."/>
            <person name="Scheres B."/>
        </authorList>
    </citation>
    <scope>FUNCTION</scope>
    <scope>MUTAGENESIS OF GLY-74</scope>
</reference>
<reference key="6">
    <citation type="journal article" date="2003" name="Mol. Cell. Proteomics">
        <title>Large-scale analysis of in vivo phosphorylated membrane proteins by immobilized metal ion affinity chromatography and mass spectrometry.</title>
        <authorList>
            <person name="Nuehse T.S."/>
            <person name="Stensballe A."/>
            <person name="Jensen O.N."/>
            <person name="Peck S.C."/>
        </authorList>
    </citation>
    <scope>SUBCELLULAR LOCATION</scope>
    <source>
        <strain>cv. La-0</strain>
    </source>
</reference>
<reference key="7">
    <citation type="journal article" date="2004" name="Plant Cell">
        <title>Phosphoproteomics of the Arabidopsis plasma membrane and a new phosphorylation site database.</title>
        <authorList>
            <person name="Nuehse T.S."/>
            <person name="Stensballe A."/>
            <person name="Jensen O.N."/>
            <person name="Peck S.C."/>
        </authorList>
    </citation>
    <scope>SUBCELLULAR LOCATION</scope>
</reference>
<reference key="8">
    <citation type="journal article" date="2008" name="Plant Cell">
        <title>The receptor kinase CORYNE of Arabidopsis transmits the stem cell-limiting signal CLAVATA3 independently of CLAVATA1.</title>
        <authorList>
            <person name="Mueller R."/>
            <person name="Bleckmann A."/>
            <person name="Simon R."/>
        </authorList>
    </citation>
    <scope>FUNCTION</scope>
    <scope>MUTAGENESIS OF GLY-70 AND ASP-263</scope>
    <scope>TISSUE SPECIFICITY</scope>
    <scope>DEVELOPMENTAL STAGE</scope>
</reference>
<reference key="9">
    <citation type="journal article" date="2008" name="Plant Cell Physiol.">
        <title>The receptor-like kinase SOL2 mediates CLE signaling in Arabidopsis.</title>
        <authorList>
            <person name="Miwa H."/>
            <person name="Betsuyaku S."/>
            <person name="Iwamoto K."/>
            <person name="Kinoshita A."/>
            <person name="Fukuda H."/>
            <person name="Sawa S."/>
        </authorList>
    </citation>
    <scope>FUNCTION</scope>
    <scope>MUTAGENESIS OF GLY-74</scope>
    <scope>TISSUE SPECIFICITY</scope>
</reference>
<reference key="10">
    <citation type="journal article" date="2010" name="Planta">
        <title>CLE14/CLE20 peptides may interact with CLAVATA2/CORYNE receptor-like kinases to irreversibly inhibit cell division in the root meristem of Arabidopsis.</title>
        <authorList>
            <person name="Meng L."/>
            <person name="Feldman L.J."/>
        </authorList>
    </citation>
    <scope>FUNCTION</scope>
    <scope>SUBUNIT</scope>
    <scope>INTERACTION WITH CLE PEPTIDES</scope>
</reference>
<reference key="11">
    <citation type="journal article" date="2010" name="Plant J.">
        <title>Analysis of interactions among the CLAVATA3 receptors reveals a direct interaction between CLAVATA2 and CORYNE in Arabidopsis.</title>
        <authorList>
            <person name="Zhu Y."/>
            <person name="Wang Y."/>
            <person name="Li R."/>
            <person name="Song X."/>
            <person name="Wang Q."/>
            <person name="Huang S."/>
            <person name="Jin J.B."/>
            <person name="Liu C.-M."/>
            <person name="Lin J."/>
        </authorList>
    </citation>
    <scope>SUBCELLULAR LOCATION</scope>
    <scope>SUBUNIT</scope>
    <scope>INTERACTION WITH CLV1 AND CLV2</scope>
</reference>
<reference key="12">
    <citation type="journal article" date="2010" name="Plant J.">
        <title>CLAVATA2 forms a distinct CLE-binding receptor complex regulating Arabidopsis stem cell specification.</title>
        <authorList>
            <person name="Guo Y."/>
            <person name="Han L."/>
            <person name="Hymes M."/>
            <person name="Denver R."/>
            <person name="Clark S.E."/>
        </authorList>
    </citation>
    <scope>INTERACTION WITH CLV2</scope>
</reference>
<reference key="13">
    <citation type="journal article" date="2010" name="Plant Physiol.">
        <title>Stem cell signaling in Arabidopsis requires CRN to localize CLV2 to the plasma membrane.</title>
        <authorList>
            <person name="Bleckmann A."/>
            <person name="Weidtkamp-Peters S."/>
            <person name="Seidel C.A.M."/>
            <person name="Simon R."/>
        </authorList>
    </citation>
    <scope>FUNCTION</scope>
    <scope>SUBCELLULAR LOCATION</scope>
    <scope>SUBUNIT</scope>
</reference>
<reference key="14">
    <citation type="journal article" date="2010" name="Plant Signal. Behav.">
        <title>Multiple receptor complexes assembled for transmitting CLV3 signaling in Arabidopsis.</title>
        <authorList>
            <person name="Zhu Y."/>
            <person name="Wan Y."/>
            <person name="Lin J."/>
        </authorList>
    </citation>
    <scope>SUBUNIT</scope>
</reference>
<reference key="15">
    <citation type="journal article" date="2010" name="Plant Signal. Behav.">
        <title>Membrane distributions of two ligand-binding receptor complexes in the CLAVATA pathway.</title>
        <authorList>
            <person name="Guo Y."/>
            <person name="Clark S.E."/>
        </authorList>
    </citation>
    <scope>SUBCELLULAR LOCATION</scope>
</reference>
<reference key="16">
    <citation type="journal article" date="2011" name="Genetics">
        <title>CLAVATA signaling pathway receptors of Arabidopsis regulate cell proliferation in fruit organ formation as well as in meristems.</title>
        <authorList>
            <person name="Durbak A.R."/>
            <person name="Tax F.E."/>
        </authorList>
    </citation>
    <scope>DISRUPTION PHENOTYPE</scope>
</reference>
<reference key="17">
    <citation type="journal article" date="2011" name="Plant J.">
        <title>Nematode CLE signaling in Arabidopsis requires CLAVATA2 and CORYNE.</title>
        <authorList>
            <person name="Replogle A."/>
            <person name="Wang J."/>
            <person name="Bleckmann A."/>
            <person name="Hussey R.S."/>
            <person name="Baum T.J."/>
            <person name="Sawa S."/>
            <person name="Davis E.L."/>
            <person name="Wang X."/>
            <person name="Simon R."/>
            <person name="Mitchum M.G."/>
        </authorList>
    </citation>
    <scope>FUNCTION</scope>
    <scope>DISRUPTION PHENOTYPE</scope>
    <scope>TISSUE SPECIFICITY</scope>
</reference>
<reference key="18">
    <citation type="journal article" date="2016" name="J. Exp. Bot.">
        <title>Shared and distinct functions of the pseudokinase CORYNE (CRN) in shoot and root stem cell maintenance of Arabidopsis.</title>
        <authorList>
            <person name="Somssich M."/>
            <person name="Bleckmann A."/>
            <person name="Simon R."/>
        </authorList>
    </citation>
    <scope>MUTAGENESIS OF GLY-70</scope>
    <scope>DISRUPTION PHENOTYPE</scope>
    <scope>DEVELOPMENTAL STAGE</scope>
    <scope>INTERACTION WITH CLV2</scope>
    <scope>SUBCELLULAR LOCATION</scope>
    <source>
        <strain>cv. Columbia</strain>
        <strain>cv. Landsberg erecta</strain>
    </source>
</reference>
<reference key="19">
    <citation type="journal article" date="2016" name="New Phytol.">
        <title>Arabidopsis CLAVATA1 and CLAVATA2 receptors contribute to Ralstonia solanacearum pathogenicity through a miR169-dependent pathway.</title>
        <authorList>
            <person name="Hanemian M."/>
            <person name="Barlet X."/>
            <person name="Sorin C."/>
            <person name="Yadeta K.A."/>
            <person name="Keller H."/>
            <person name="Favery B."/>
            <person name="Simon R."/>
            <person name="Thomma B.P."/>
            <person name="Hartmann C."/>
            <person name="Crespi M."/>
            <person name="Marco Y."/>
            <person name="Tremousaygue D."/>
            <person name="Deslandes L."/>
        </authorList>
    </citation>
    <scope>DISRUPTION PHENOTYPE</scope>
</reference>
<reference key="20">
    <citation type="journal article" date="2017" name="Dev. Cell">
        <title>Phosphate starvation-dependent iron mobilization induces CLE14 expression to trigger root meristem differentiation through CLV2/PEPR2 signaling.</title>
        <authorList>
            <person name="Gutierrez-Alanis D."/>
            <person name="Yong-Villalobos L."/>
            <person name="Jimenez-Sandoval P."/>
            <person name="Alatorre-Cobos F."/>
            <person name="Oropeza-Aburto A."/>
            <person name="Mora-Macias J."/>
            <person name="Sanchez-Rodriguez F."/>
            <person name="Cruz-Ramirez A."/>
            <person name="Herrera-Estrella L."/>
        </authorList>
    </citation>
    <scope>FUNCTION</scope>
</reference>
<reference key="21">
    <citation type="journal article" date="2017" name="EMBO Rep.">
        <title>Perception of root-active CLE peptides requires CORYNE function in the phloem vasculature.</title>
        <authorList>
            <person name="Hazak O."/>
            <person name="Brandt B."/>
            <person name="Cattaneo P."/>
            <person name="Santiago J."/>
            <person name="Rodriguez-Villalon A."/>
            <person name="Hothorn M."/>
            <person name="Hardtke C.S."/>
        </authorList>
    </citation>
    <scope>FUNCTION</scope>
    <scope>DISRUPTION PHENOTYPE</scope>
    <scope>TISSUE SPECIFICITY</scope>
    <scope>SUBCELLULAR LOCATION</scope>
    <scope>SUBUNIT</scope>
    <source>
        <strain>cv. Columbia</strain>
    </source>
</reference>
<keyword id="KW-0025">Alternative splicing</keyword>
<keyword id="KW-0067">ATP-binding</keyword>
<keyword id="KW-1003">Cell membrane</keyword>
<keyword id="KW-0256">Endoplasmic reticulum</keyword>
<keyword id="KW-0472">Membrane</keyword>
<keyword id="KW-0547">Nucleotide-binding</keyword>
<keyword id="KW-1185">Reference proteome</keyword>
<keyword id="KW-0732">Signal</keyword>
<keyword id="KW-0812">Transmembrane</keyword>
<keyword id="KW-1133">Transmembrane helix</keyword>
<name>CRN_ARATH</name>
<feature type="signal peptide" evidence="1">
    <location>
        <begin position="1"/>
        <end position="33"/>
    </location>
</feature>
<feature type="chain" id="PRO_0000401211" description="Inactive leucine-rich repeat receptor-like protein kinase CORYNE">
    <location>
        <begin position="34"/>
        <end position="401"/>
    </location>
</feature>
<feature type="topological domain" description="Extracellular" evidence="1">
    <location>
        <begin position="34"/>
        <end position="62"/>
    </location>
</feature>
<feature type="transmembrane region" description="Helical" evidence="1">
    <location>
        <begin position="63"/>
        <end position="83"/>
    </location>
</feature>
<feature type="topological domain" description="Cytoplasmic" evidence="1">
    <location>
        <begin position="84"/>
        <end position="401"/>
    </location>
</feature>
<feature type="domain" description="Protein kinase" evidence="2">
    <location>
        <begin position="118"/>
        <end position="401"/>
    </location>
</feature>
<feature type="binding site" evidence="2">
    <location>
        <begin position="124"/>
        <end position="132"/>
    </location>
    <ligand>
        <name>ATP</name>
        <dbReference type="ChEBI" id="CHEBI:30616"/>
    </ligand>
</feature>
<feature type="binding site" evidence="2">
    <location>
        <position position="146"/>
    </location>
    <ligand>
        <name>ATP</name>
        <dbReference type="ChEBI" id="CHEBI:30616"/>
    </ligand>
</feature>
<feature type="splice variant" id="VSP_040147" description="In isoform 2 and isoform 3." evidence="21">
    <location>
        <begin position="120"/>
        <end position="144"/>
    </location>
</feature>
<feature type="splice variant" id="VSP_040148" description="In isoform 3." evidence="23">
    <original>YTDKSDIFSFGMILGVLLTGRDPTHPFCEESA</original>
    <variation>QKRHIQLWDDIGCSFNRKRPDPPVLRRVCKRR</variation>
    <location>
        <begin position="300"/>
        <end position="331"/>
    </location>
</feature>
<feature type="splice variant" id="VSP_040149" description="In isoform 3." evidence="23">
    <location>
        <begin position="332"/>
        <end position="401"/>
    </location>
</feature>
<feature type="mutagenesis site" description="In crn-1; stem cell proliferation leading to large meristems, and increased carpel number." evidence="6 17">
    <original>G</original>
    <variation>E</variation>
    <location>
        <position position="70"/>
    </location>
</feature>
<feature type="mutagenesis site" description="In sol2; stem cell proliferation leading to large meristems, increased carpel number, and slightly shorter roots. Suppresses the short root phenotype of transgenic plants constitutively overexpressing the CLE19 gene. Enhanced resistance to CLV3 peptide that inhibits root growth." evidence="3 7">
    <original>G</original>
    <variation>R</variation>
    <location>
        <position position="74"/>
    </location>
</feature>
<feature type="mutagenesis site" description="In crn-2; increased carpel number." evidence="6">
    <original>D</original>
    <variation>N</variation>
    <location>
        <position position="263"/>
    </location>
</feature>
<feature type="sequence conflict" description="In Ref. 3; BX832423." evidence="23" ref="3">
    <original>H</original>
    <variation>N</variation>
    <location>
        <position position="393"/>
    </location>
</feature>
<evidence type="ECO:0000255" key="1"/>
<evidence type="ECO:0000255" key="2">
    <source>
        <dbReference type="PROSITE-ProRule" id="PRU00159"/>
    </source>
</evidence>
<evidence type="ECO:0000269" key="3">
    <source>
    </source>
</evidence>
<evidence type="ECO:0000269" key="4">
    <source>
    </source>
</evidence>
<evidence type="ECO:0000269" key="5">
    <source>
    </source>
</evidence>
<evidence type="ECO:0000269" key="6">
    <source>
    </source>
</evidence>
<evidence type="ECO:0000269" key="7">
    <source>
    </source>
</evidence>
<evidence type="ECO:0000269" key="8">
    <source>
    </source>
</evidence>
<evidence type="ECO:0000269" key="9">
    <source>
    </source>
</evidence>
<evidence type="ECO:0000269" key="10">
    <source>
    </source>
</evidence>
<evidence type="ECO:0000269" key="11">
    <source>
    </source>
</evidence>
<evidence type="ECO:0000269" key="12">
    <source>
    </source>
</evidence>
<evidence type="ECO:0000269" key="13">
    <source>
    </source>
</evidence>
<evidence type="ECO:0000269" key="14">
    <source>
    </source>
</evidence>
<evidence type="ECO:0000269" key="15">
    <source>
    </source>
</evidence>
<evidence type="ECO:0000269" key="16">
    <source>
    </source>
</evidence>
<evidence type="ECO:0000269" key="17">
    <source>
    </source>
</evidence>
<evidence type="ECO:0000269" key="18">
    <source>
    </source>
</evidence>
<evidence type="ECO:0000269" key="19">
    <source>
    </source>
</evidence>
<evidence type="ECO:0000303" key="20">
    <source>
    </source>
</evidence>
<evidence type="ECO:0000303" key="21">
    <source>
    </source>
</evidence>
<evidence type="ECO:0000303" key="22">
    <source>
    </source>
</evidence>
<evidence type="ECO:0000305" key="23"/>
<evidence type="ECO:0000312" key="24">
    <source>
        <dbReference type="Araport" id="AT5G13290"/>
    </source>
</evidence>
<evidence type="ECO:0000312" key="25">
    <source>
        <dbReference type="EMBL" id="CAB86636.1"/>
    </source>
</evidence>
<sequence>MKQRRRRNGCSSSNTISLLLLFFLVFFSRTSTSTSCRRRTVKHLSTTSTSSTPLESRITSKVIVISIVSGILTGLVSALVLAFLVRSIVKFMKQTPILKGPVVFSPKITPKSLHAALSNGIQLLGSDLNGKYYKMVLDNGLVVAVKRLGSLEGVGSPESSSSKSVKRRLQKELELLAGLRHRNLMSLRAYVRESDEFSLVYDYMPNGSLEDVMNKVRTKEVELGWEIRLRVAVGIVKGLQYLHFSCETQILHYNLKPTNVMLDSEFEPRLADCGLAKIMPSSHTAVSCYSAPESSQSNRYTDKSDIFSFGMILGVLLTGRDPTHPFCEESASGGSLGQWLKHLQQSGEAREALDKTILGEEVEEDEMLMALRITIICLSDFPADRPSSDELVHMLTQLHSF</sequence>
<accession>Q9LYU7</accession>
<accession>A8MRZ3</accession>
<accession>Q3E9I0</accession>
<organism>
    <name type="scientific">Arabidopsis thaliana</name>
    <name type="common">Mouse-ear cress</name>
    <dbReference type="NCBI Taxonomy" id="3702"/>
    <lineage>
        <taxon>Eukaryota</taxon>
        <taxon>Viridiplantae</taxon>
        <taxon>Streptophyta</taxon>
        <taxon>Embryophyta</taxon>
        <taxon>Tracheophyta</taxon>
        <taxon>Spermatophyta</taxon>
        <taxon>Magnoliopsida</taxon>
        <taxon>eudicotyledons</taxon>
        <taxon>Gunneridae</taxon>
        <taxon>Pentapetalae</taxon>
        <taxon>rosids</taxon>
        <taxon>malvids</taxon>
        <taxon>Brassicales</taxon>
        <taxon>Brassicaceae</taxon>
        <taxon>Camelineae</taxon>
        <taxon>Arabidopsis</taxon>
    </lineage>
</organism>
<dbReference type="EMBL" id="AL163491">
    <property type="protein sequence ID" value="CAB86636.1"/>
    <property type="molecule type" value="Genomic_DNA"/>
</dbReference>
<dbReference type="EMBL" id="CP002688">
    <property type="protein sequence ID" value="AED91875.1"/>
    <property type="molecule type" value="Genomic_DNA"/>
</dbReference>
<dbReference type="EMBL" id="CP002688">
    <property type="protein sequence ID" value="AED91876.1"/>
    <property type="molecule type" value="Genomic_DNA"/>
</dbReference>
<dbReference type="EMBL" id="CP002688">
    <property type="protein sequence ID" value="AED91877.1"/>
    <property type="molecule type" value="Genomic_DNA"/>
</dbReference>
<dbReference type="EMBL" id="BX832423">
    <property type="status" value="NOT_ANNOTATED_CDS"/>
    <property type="molecule type" value="mRNA"/>
</dbReference>
<dbReference type="EMBL" id="BX829584">
    <property type="status" value="NOT_ANNOTATED_CDS"/>
    <property type="molecule type" value="mRNA"/>
</dbReference>
<dbReference type="EMBL" id="AK228624">
    <property type="status" value="NOT_ANNOTATED_CDS"/>
    <property type="molecule type" value="mRNA"/>
</dbReference>
<dbReference type="PIR" id="T48576">
    <property type="entry name" value="T48576"/>
</dbReference>
<dbReference type="RefSeq" id="NP_001078577.1">
    <molecule id="Q9LYU7-3"/>
    <property type="nucleotide sequence ID" value="NM_001085108.1"/>
</dbReference>
<dbReference type="RefSeq" id="NP_196833.2">
    <molecule id="Q9LYU7-2"/>
    <property type="nucleotide sequence ID" value="NM_121332.4"/>
</dbReference>
<dbReference type="RefSeq" id="NP_850812.2">
    <molecule id="Q9LYU7-1"/>
    <property type="nucleotide sequence ID" value="NM_180481.4"/>
</dbReference>
<dbReference type="SMR" id="Q9LYU7"/>
<dbReference type="BioGRID" id="16448">
    <property type="interactions" value="5"/>
</dbReference>
<dbReference type="FunCoup" id="Q9LYU7">
    <property type="interactions" value="1300"/>
</dbReference>
<dbReference type="STRING" id="3702.Q9LYU7"/>
<dbReference type="iPTMnet" id="Q9LYU7"/>
<dbReference type="PaxDb" id="3702-AT5G13290.2"/>
<dbReference type="ProteomicsDB" id="220310">
    <molecule id="Q9LYU7-1"/>
</dbReference>
<dbReference type="EnsemblPlants" id="AT5G13290.1">
    <molecule id="Q9LYU7-2"/>
    <property type="protein sequence ID" value="AT5G13290.1"/>
    <property type="gene ID" value="AT5G13290"/>
</dbReference>
<dbReference type="EnsemblPlants" id="AT5G13290.2">
    <molecule id="Q9LYU7-1"/>
    <property type="protein sequence ID" value="AT5G13290.2"/>
    <property type="gene ID" value="AT5G13290"/>
</dbReference>
<dbReference type="EnsemblPlants" id="AT5G13290.3">
    <molecule id="Q9LYU7-3"/>
    <property type="protein sequence ID" value="AT5G13290.3"/>
    <property type="gene ID" value="AT5G13290"/>
</dbReference>
<dbReference type="GeneID" id="831170"/>
<dbReference type="Gramene" id="AT5G13290.1">
    <molecule id="Q9LYU7-2"/>
    <property type="protein sequence ID" value="AT5G13290.1"/>
    <property type="gene ID" value="AT5G13290"/>
</dbReference>
<dbReference type="Gramene" id="AT5G13290.2">
    <molecule id="Q9LYU7-1"/>
    <property type="protein sequence ID" value="AT5G13290.2"/>
    <property type="gene ID" value="AT5G13290"/>
</dbReference>
<dbReference type="Gramene" id="AT5G13290.3">
    <molecule id="Q9LYU7-3"/>
    <property type="protein sequence ID" value="AT5G13290.3"/>
    <property type="gene ID" value="AT5G13290"/>
</dbReference>
<dbReference type="KEGG" id="ath:AT5G13290"/>
<dbReference type="Araport" id="AT5G13290"/>
<dbReference type="TAIR" id="AT5G13290">
    <property type="gene designation" value="CRN"/>
</dbReference>
<dbReference type="eggNOG" id="KOG1187">
    <property type="taxonomic scope" value="Eukaryota"/>
</dbReference>
<dbReference type="HOGENOM" id="CLU_000288_32_0_1"/>
<dbReference type="InParanoid" id="Q9LYU7"/>
<dbReference type="OMA" id="MEMMASK"/>
<dbReference type="PhylomeDB" id="Q9LYU7"/>
<dbReference type="PRO" id="PR:Q9LYU7"/>
<dbReference type="Proteomes" id="UP000006548">
    <property type="component" value="Chromosome 5"/>
</dbReference>
<dbReference type="ExpressionAtlas" id="Q9LYU7">
    <property type="expression patterns" value="baseline and differential"/>
</dbReference>
<dbReference type="GO" id="GO:0005789">
    <property type="term" value="C:endoplasmic reticulum membrane"/>
    <property type="evidence" value="ECO:0000314"/>
    <property type="project" value="UniProtKB"/>
</dbReference>
<dbReference type="GO" id="GO:0005886">
    <property type="term" value="C:plasma membrane"/>
    <property type="evidence" value="ECO:0000314"/>
    <property type="project" value="UniProtKB"/>
</dbReference>
<dbReference type="GO" id="GO:0005524">
    <property type="term" value="F:ATP binding"/>
    <property type="evidence" value="ECO:0007669"/>
    <property type="project" value="UniProtKB-KW"/>
</dbReference>
<dbReference type="GO" id="GO:0001653">
    <property type="term" value="F:peptide receptor activity"/>
    <property type="evidence" value="ECO:0000315"/>
    <property type="project" value="UniProtKB"/>
</dbReference>
<dbReference type="GO" id="GO:0033612">
    <property type="term" value="F:receptor serine/threonine kinase binding"/>
    <property type="evidence" value="ECO:0000353"/>
    <property type="project" value="UniProtKB"/>
</dbReference>
<dbReference type="GO" id="GO:0005102">
    <property type="term" value="F:signaling receptor binding"/>
    <property type="evidence" value="ECO:0000353"/>
    <property type="project" value="UniProtKB"/>
</dbReference>
<dbReference type="GO" id="GO:0010078">
    <property type="term" value="P:maintenance of root meristem identity"/>
    <property type="evidence" value="ECO:0000315"/>
    <property type="project" value="UniProtKB"/>
</dbReference>
<dbReference type="GO" id="GO:0010088">
    <property type="term" value="P:phloem development"/>
    <property type="evidence" value="ECO:0000315"/>
    <property type="project" value="UniProtKB"/>
</dbReference>
<dbReference type="GO" id="GO:0045595">
    <property type="term" value="P:regulation of cell differentiation"/>
    <property type="evidence" value="ECO:0000315"/>
    <property type="project" value="UniProtKB"/>
</dbReference>
<dbReference type="GO" id="GO:0009909">
    <property type="term" value="P:regulation of flower development"/>
    <property type="evidence" value="ECO:0000315"/>
    <property type="project" value="TAIR"/>
</dbReference>
<dbReference type="GO" id="GO:0010075">
    <property type="term" value="P:regulation of meristem growth"/>
    <property type="evidence" value="ECO:0000314"/>
    <property type="project" value="UniProtKB"/>
</dbReference>
<dbReference type="CDD" id="cd14066">
    <property type="entry name" value="STKc_IRAK"/>
    <property type="match status" value="1"/>
</dbReference>
<dbReference type="FunFam" id="1.10.510.10:FF:000583">
    <property type="entry name" value="Inactive leucine-rich repeat receptor-like protein kinase CORYNE"/>
    <property type="match status" value="1"/>
</dbReference>
<dbReference type="FunFam" id="3.30.200.20:FF:000669">
    <property type="entry name" value="Inactive leucine-rich repeat receptor-like protein kinase CORYNE"/>
    <property type="match status" value="1"/>
</dbReference>
<dbReference type="Gene3D" id="3.30.200.20">
    <property type="entry name" value="Phosphorylase Kinase, domain 1"/>
    <property type="match status" value="1"/>
</dbReference>
<dbReference type="Gene3D" id="1.10.510.10">
    <property type="entry name" value="Transferase(Phosphotransferase) domain 1"/>
    <property type="match status" value="1"/>
</dbReference>
<dbReference type="InterPro" id="IPR011009">
    <property type="entry name" value="Kinase-like_dom_sf"/>
</dbReference>
<dbReference type="InterPro" id="IPR051564">
    <property type="entry name" value="LRR_receptor-like_kinase"/>
</dbReference>
<dbReference type="InterPro" id="IPR000719">
    <property type="entry name" value="Prot_kinase_dom"/>
</dbReference>
<dbReference type="PANTHER" id="PTHR48055">
    <property type="entry name" value="LEUCINE-RICH REPEAT RECEPTOR PROTEIN KINASE EMS1"/>
    <property type="match status" value="1"/>
</dbReference>
<dbReference type="PANTHER" id="PTHR48055:SF22">
    <property type="entry name" value="LEUCINE-RICH REPEAT RECEPTOR-LIKE SERINE_THREONINE_TYROSINE-PROTEIN KINASE SOBIR1"/>
    <property type="match status" value="1"/>
</dbReference>
<dbReference type="Pfam" id="PF00069">
    <property type="entry name" value="Pkinase"/>
    <property type="match status" value="1"/>
</dbReference>
<dbReference type="SUPFAM" id="SSF56112">
    <property type="entry name" value="Protein kinase-like (PK-like)"/>
    <property type="match status" value="1"/>
</dbReference>
<dbReference type="PROSITE" id="PS50011">
    <property type="entry name" value="PROTEIN_KINASE_DOM"/>
    <property type="match status" value="1"/>
</dbReference>
<protein>
    <recommendedName>
        <fullName evidence="22">Inactive leucine-rich repeat receptor-like protein kinase CORYNE</fullName>
    </recommendedName>
    <alternativeName>
        <fullName evidence="20">Protein SUPPRESSOR OF OVEREXPRESSION OF LLP1 2</fullName>
    </alternativeName>
</protein>
<proteinExistence type="evidence at protein level"/>
<gene>
    <name evidence="22" type="primary">CRN</name>
    <name evidence="20" type="synonym">SOL2</name>
    <name evidence="24" type="ordered locus">At5g13290</name>
    <name evidence="25" type="ORF">T31B5.110</name>
</gene>